<gene>
    <name evidence="1" type="primary">ycf3</name>
</gene>
<comment type="function">
    <text evidence="1">Essential for the assembly of the photosystem I (PSI) complex. May act as a chaperone-like factor to guide the assembly of the PSI subunits.</text>
</comment>
<comment type="subcellular location">
    <subcellularLocation>
        <location evidence="1">Plastid</location>
        <location evidence="1">Chloroplast thylakoid membrane</location>
        <topology evidence="1">Peripheral membrane protein</topology>
    </subcellularLocation>
</comment>
<comment type="similarity">
    <text evidence="1">Belongs to the Ycf3 family.</text>
</comment>
<geneLocation type="chloroplast"/>
<evidence type="ECO:0000255" key="1">
    <source>
        <dbReference type="HAMAP-Rule" id="MF_00439"/>
    </source>
</evidence>
<protein>
    <recommendedName>
        <fullName evidence="1">Photosystem I assembly protein Ycf3</fullName>
    </recommendedName>
</protein>
<keyword id="KW-0150">Chloroplast</keyword>
<keyword id="KW-0472">Membrane</keyword>
<keyword id="KW-0602">Photosynthesis</keyword>
<keyword id="KW-0934">Plastid</keyword>
<keyword id="KW-0677">Repeat</keyword>
<keyword id="KW-0793">Thylakoid</keyword>
<keyword id="KW-0802">TPR repeat</keyword>
<proteinExistence type="inferred from homology"/>
<name>YCF3_CHLSC</name>
<accession>A6MMC3</accession>
<sequence>MPRSRINGNFIDKTFSIVANILLRIIPTTSGEKEAFTYYRDGMSAQSDGNYAEALQNYYEATRLEIDPYDRSYILYNIGLIHTSNGEHTKALEYYFRALERNPFLPQAFNNMAVICHYRGEQAIRQGDSEIAEAWSDQAAEYWKQAIALTPGNYIEAHNWLKITRRFE</sequence>
<dbReference type="EMBL" id="EF380352">
    <property type="protein sequence ID" value="ABQ43261.1"/>
    <property type="molecule type" value="Genomic_DNA"/>
</dbReference>
<dbReference type="RefSeq" id="YP_001294099.1">
    <property type="nucleotide sequence ID" value="NC_009598.1"/>
</dbReference>
<dbReference type="SMR" id="A6MMC3"/>
<dbReference type="GeneID" id="5236436"/>
<dbReference type="GO" id="GO:0009535">
    <property type="term" value="C:chloroplast thylakoid membrane"/>
    <property type="evidence" value="ECO:0007669"/>
    <property type="project" value="UniProtKB-SubCell"/>
</dbReference>
<dbReference type="GO" id="GO:0015979">
    <property type="term" value="P:photosynthesis"/>
    <property type="evidence" value="ECO:0007669"/>
    <property type="project" value="UniProtKB-UniRule"/>
</dbReference>
<dbReference type="FunFam" id="1.25.40.10:FF:000004">
    <property type="entry name" value="Photosystem I assembly protein Ycf3"/>
    <property type="match status" value="1"/>
</dbReference>
<dbReference type="Gene3D" id="1.25.40.10">
    <property type="entry name" value="Tetratricopeptide repeat domain"/>
    <property type="match status" value="1"/>
</dbReference>
<dbReference type="HAMAP" id="MF_00439">
    <property type="entry name" value="Ycf3"/>
    <property type="match status" value="1"/>
</dbReference>
<dbReference type="InterPro" id="IPR022818">
    <property type="entry name" value="PSI_Ycf3_assembly"/>
</dbReference>
<dbReference type="InterPro" id="IPR011990">
    <property type="entry name" value="TPR-like_helical_dom_sf"/>
</dbReference>
<dbReference type="InterPro" id="IPR019734">
    <property type="entry name" value="TPR_rpt"/>
</dbReference>
<dbReference type="InterPro" id="IPR051685">
    <property type="entry name" value="Ycf3/AcsC/BcsC/TPR_MFPF"/>
</dbReference>
<dbReference type="NCBIfam" id="NF002725">
    <property type="entry name" value="PRK02603.1"/>
    <property type="match status" value="1"/>
</dbReference>
<dbReference type="PANTHER" id="PTHR44943">
    <property type="entry name" value="CELLULOSE SYNTHASE OPERON PROTEIN C"/>
    <property type="match status" value="1"/>
</dbReference>
<dbReference type="PANTHER" id="PTHR44943:SF8">
    <property type="entry name" value="TPR REPEAT-CONTAINING PROTEIN MJ0263"/>
    <property type="match status" value="1"/>
</dbReference>
<dbReference type="Pfam" id="PF00515">
    <property type="entry name" value="TPR_1"/>
    <property type="match status" value="1"/>
</dbReference>
<dbReference type="SMART" id="SM00028">
    <property type="entry name" value="TPR"/>
    <property type="match status" value="3"/>
</dbReference>
<dbReference type="SUPFAM" id="SSF48452">
    <property type="entry name" value="TPR-like"/>
    <property type="match status" value="1"/>
</dbReference>
<dbReference type="PROSITE" id="PS50005">
    <property type="entry name" value="TPR"/>
    <property type="match status" value="3"/>
</dbReference>
<dbReference type="PROSITE" id="PS50293">
    <property type="entry name" value="TPR_REGION"/>
    <property type="match status" value="1"/>
</dbReference>
<feature type="chain" id="PRO_0000325054" description="Photosystem I assembly protein Ycf3">
    <location>
        <begin position="1"/>
        <end position="168"/>
    </location>
</feature>
<feature type="repeat" description="TPR 1">
    <location>
        <begin position="35"/>
        <end position="68"/>
    </location>
</feature>
<feature type="repeat" description="TPR 2">
    <location>
        <begin position="72"/>
        <end position="105"/>
    </location>
</feature>
<feature type="repeat" description="TPR 3">
    <location>
        <begin position="120"/>
        <end position="153"/>
    </location>
</feature>
<reference key="1">
    <citation type="journal article" date="2007" name="Mol. Phylogenet. Evol.">
        <title>Phylogenetic and evolutionary implications of complete chloroplast genome sequences of four early-diverging angiosperms: Buxus (Buxaceae), Chloranthus (Chloranthaceae), Dioscorea (Dioscoreaceae), and Illicium (Schisandraceae).</title>
        <authorList>
            <person name="Hansen D.R."/>
            <person name="Dastidar S.G."/>
            <person name="Cai Z."/>
            <person name="Penaflor C."/>
            <person name="Kuehl J.V."/>
            <person name="Boore J.L."/>
            <person name="Jansen R.K."/>
        </authorList>
    </citation>
    <scope>NUCLEOTIDE SEQUENCE [LARGE SCALE GENOMIC DNA]</scope>
</reference>
<organism>
    <name type="scientific">Chloranthus spicatus</name>
    <name type="common">Chulantree</name>
    <name type="synonym">Nigrina spicata</name>
    <dbReference type="NCBI Taxonomy" id="13006"/>
    <lineage>
        <taxon>Eukaryota</taxon>
        <taxon>Viridiplantae</taxon>
        <taxon>Streptophyta</taxon>
        <taxon>Embryophyta</taxon>
        <taxon>Tracheophyta</taxon>
        <taxon>Spermatophyta</taxon>
        <taxon>Magnoliopsida</taxon>
        <taxon>Chloranthales</taxon>
        <taxon>Chloranthaceae</taxon>
        <taxon>Chloranthus</taxon>
    </lineage>
</organism>